<proteinExistence type="inferred from homology"/>
<gene>
    <name evidence="1" type="primary">thiI</name>
    <name type="ordered locus">Ping_2227</name>
</gene>
<feature type="chain" id="PRO_1000074255" description="tRNA sulfurtransferase">
    <location>
        <begin position="1"/>
        <end position="484"/>
    </location>
</feature>
<feature type="domain" description="THUMP" evidence="1">
    <location>
        <begin position="63"/>
        <end position="167"/>
    </location>
</feature>
<feature type="domain" description="Rhodanese" evidence="1">
    <location>
        <begin position="406"/>
        <end position="484"/>
    </location>
</feature>
<feature type="active site" description="Cysteine persulfide intermediate" evidence="1">
    <location>
        <position position="458"/>
    </location>
</feature>
<feature type="binding site" evidence="1">
    <location>
        <begin position="185"/>
        <end position="186"/>
    </location>
    <ligand>
        <name>ATP</name>
        <dbReference type="ChEBI" id="CHEBI:30616"/>
    </ligand>
</feature>
<feature type="binding site" evidence="1">
    <location>
        <position position="267"/>
    </location>
    <ligand>
        <name>ATP</name>
        <dbReference type="ChEBI" id="CHEBI:30616"/>
    </ligand>
</feature>
<feature type="binding site" evidence="1">
    <location>
        <position position="289"/>
    </location>
    <ligand>
        <name>ATP</name>
        <dbReference type="ChEBI" id="CHEBI:30616"/>
    </ligand>
</feature>
<feature type="binding site" evidence="1">
    <location>
        <position position="298"/>
    </location>
    <ligand>
        <name>ATP</name>
        <dbReference type="ChEBI" id="CHEBI:30616"/>
    </ligand>
</feature>
<feature type="disulfide bond" description="Redox-active" evidence="1">
    <location>
        <begin position="346"/>
        <end position="458"/>
    </location>
</feature>
<dbReference type="EC" id="2.8.1.4" evidence="1"/>
<dbReference type="EMBL" id="CP000510">
    <property type="protein sequence ID" value="ABM03968.1"/>
    <property type="molecule type" value="Genomic_DNA"/>
</dbReference>
<dbReference type="RefSeq" id="WP_011770528.1">
    <property type="nucleotide sequence ID" value="NC_008709.1"/>
</dbReference>
<dbReference type="SMR" id="A1SWV3"/>
<dbReference type="STRING" id="357804.Ping_2227"/>
<dbReference type="KEGG" id="pin:Ping_2227"/>
<dbReference type="eggNOG" id="COG0301">
    <property type="taxonomic scope" value="Bacteria"/>
</dbReference>
<dbReference type="eggNOG" id="COG0607">
    <property type="taxonomic scope" value="Bacteria"/>
</dbReference>
<dbReference type="HOGENOM" id="CLU_037952_4_1_6"/>
<dbReference type="OrthoDB" id="9773948at2"/>
<dbReference type="UniPathway" id="UPA00060"/>
<dbReference type="Proteomes" id="UP000000639">
    <property type="component" value="Chromosome"/>
</dbReference>
<dbReference type="GO" id="GO:0005829">
    <property type="term" value="C:cytosol"/>
    <property type="evidence" value="ECO:0007669"/>
    <property type="project" value="TreeGrafter"/>
</dbReference>
<dbReference type="GO" id="GO:0005524">
    <property type="term" value="F:ATP binding"/>
    <property type="evidence" value="ECO:0007669"/>
    <property type="project" value="UniProtKB-UniRule"/>
</dbReference>
<dbReference type="GO" id="GO:0004810">
    <property type="term" value="F:CCA tRNA nucleotidyltransferase activity"/>
    <property type="evidence" value="ECO:0007669"/>
    <property type="project" value="InterPro"/>
</dbReference>
<dbReference type="GO" id="GO:0000049">
    <property type="term" value="F:tRNA binding"/>
    <property type="evidence" value="ECO:0007669"/>
    <property type="project" value="UniProtKB-UniRule"/>
</dbReference>
<dbReference type="GO" id="GO:0140741">
    <property type="term" value="F:tRNA-uracil-4 sulfurtransferase activity"/>
    <property type="evidence" value="ECO:0007669"/>
    <property type="project" value="UniProtKB-EC"/>
</dbReference>
<dbReference type="GO" id="GO:0009228">
    <property type="term" value="P:thiamine biosynthetic process"/>
    <property type="evidence" value="ECO:0007669"/>
    <property type="project" value="UniProtKB-KW"/>
</dbReference>
<dbReference type="GO" id="GO:0009229">
    <property type="term" value="P:thiamine diphosphate biosynthetic process"/>
    <property type="evidence" value="ECO:0007669"/>
    <property type="project" value="UniProtKB-UniRule"/>
</dbReference>
<dbReference type="GO" id="GO:0052837">
    <property type="term" value="P:thiazole biosynthetic process"/>
    <property type="evidence" value="ECO:0007669"/>
    <property type="project" value="InterPro"/>
</dbReference>
<dbReference type="GO" id="GO:0002937">
    <property type="term" value="P:tRNA 4-thiouridine biosynthesis"/>
    <property type="evidence" value="ECO:0007669"/>
    <property type="project" value="TreeGrafter"/>
</dbReference>
<dbReference type="CDD" id="cd01712">
    <property type="entry name" value="PPase_ThiI"/>
    <property type="match status" value="1"/>
</dbReference>
<dbReference type="CDD" id="cd00158">
    <property type="entry name" value="RHOD"/>
    <property type="match status" value="1"/>
</dbReference>
<dbReference type="CDD" id="cd11716">
    <property type="entry name" value="THUMP_ThiI"/>
    <property type="match status" value="1"/>
</dbReference>
<dbReference type="FunFam" id="3.40.50.620:FF:000029">
    <property type="entry name" value="tRNA sulfurtransferase"/>
    <property type="match status" value="1"/>
</dbReference>
<dbReference type="Gene3D" id="3.30.2130.30">
    <property type="match status" value="1"/>
</dbReference>
<dbReference type="Gene3D" id="3.40.50.620">
    <property type="entry name" value="HUPs"/>
    <property type="match status" value="1"/>
</dbReference>
<dbReference type="Gene3D" id="3.40.250.10">
    <property type="entry name" value="Rhodanese-like domain"/>
    <property type="match status" value="1"/>
</dbReference>
<dbReference type="HAMAP" id="MF_00021">
    <property type="entry name" value="ThiI"/>
    <property type="match status" value="1"/>
</dbReference>
<dbReference type="InterPro" id="IPR001763">
    <property type="entry name" value="Rhodanese-like_dom"/>
</dbReference>
<dbReference type="InterPro" id="IPR036873">
    <property type="entry name" value="Rhodanese-like_dom_sf"/>
</dbReference>
<dbReference type="InterPro" id="IPR014729">
    <property type="entry name" value="Rossmann-like_a/b/a_fold"/>
</dbReference>
<dbReference type="InterPro" id="IPR020536">
    <property type="entry name" value="ThiI_AANH"/>
</dbReference>
<dbReference type="InterPro" id="IPR054173">
    <property type="entry name" value="ThiI_fer"/>
</dbReference>
<dbReference type="InterPro" id="IPR049961">
    <property type="entry name" value="ThiI_N"/>
</dbReference>
<dbReference type="InterPro" id="IPR026340">
    <property type="entry name" value="THII_Thiazole_biosynth_dom"/>
</dbReference>
<dbReference type="InterPro" id="IPR004114">
    <property type="entry name" value="THUMP_dom"/>
</dbReference>
<dbReference type="InterPro" id="IPR049962">
    <property type="entry name" value="THUMP_ThiI"/>
</dbReference>
<dbReference type="InterPro" id="IPR003720">
    <property type="entry name" value="tRNA_STrfase"/>
</dbReference>
<dbReference type="InterPro" id="IPR050102">
    <property type="entry name" value="tRNA_sulfurtransferase_ThiI"/>
</dbReference>
<dbReference type="NCBIfam" id="TIGR04271">
    <property type="entry name" value="ThiI_C_thiazole"/>
    <property type="match status" value="1"/>
</dbReference>
<dbReference type="NCBIfam" id="TIGR00342">
    <property type="entry name" value="tRNA uracil 4-sulfurtransferase ThiI"/>
    <property type="match status" value="1"/>
</dbReference>
<dbReference type="PANTHER" id="PTHR43209">
    <property type="entry name" value="TRNA SULFURTRANSFERASE"/>
    <property type="match status" value="1"/>
</dbReference>
<dbReference type="PANTHER" id="PTHR43209:SF1">
    <property type="entry name" value="TRNA SULFURTRANSFERASE"/>
    <property type="match status" value="1"/>
</dbReference>
<dbReference type="Pfam" id="PF02568">
    <property type="entry name" value="ThiI"/>
    <property type="match status" value="1"/>
</dbReference>
<dbReference type="Pfam" id="PF22025">
    <property type="entry name" value="ThiI_fer"/>
    <property type="match status" value="1"/>
</dbReference>
<dbReference type="Pfam" id="PF02926">
    <property type="entry name" value="THUMP"/>
    <property type="match status" value="1"/>
</dbReference>
<dbReference type="SMART" id="SM00981">
    <property type="entry name" value="THUMP"/>
    <property type="match status" value="1"/>
</dbReference>
<dbReference type="SUPFAM" id="SSF52402">
    <property type="entry name" value="Adenine nucleotide alpha hydrolases-like"/>
    <property type="match status" value="1"/>
</dbReference>
<dbReference type="SUPFAM" id="SSF52821">
    <property type="entry name" value="Rhodanese/Cell cycle control phosphatase"/>
    <property type="match status" value="1"/>
</dbReference>
<dbReference type="SUPFAM" id="SSF143437">
    <property type="entry name" value="THUMP domain-like"/>
    <property type="match status" value="1"/>
</dbReference>
<dbReference type="PROSITE" id="PS50206">
    <property type="entry name" value="RHODANESE_3"/>
    <property type="match status" value="1"/>
</dbReference>
<dbReference type="PROSITE" id="PS51165">
    <property type="entry name" value="THUMP"/>
    <property type="match status" value="1"/>
</dbReference>
<evidence type="ECO:0000255" key="1">
    <source>
        <dbReference type="HAMAP-Rule" id="MF_00021"/>
    </source>
</evidence>
<name>THII_PSYIN</name>
<comment type="function">
    <text evidence="1">Catalyzes the ATP-dependent transfer of a sulfur to tRNA to produce 4-thiouridine in position 8 of tRNAs, which functions as a near-UV photosensor. Also catalyzes the transfer of sulfur to the sulfur carrier protein ThiS, forming ThiS-thiocarboxylate. This is a step in the synthesis of thiazole, in the thiamine biosynthesis pathway. The sulfur is donated as persulfide by IscS.</text>
</comment>
<comment type="catalytic activity">
    <reaction evidence="1">
        <text>[ThiI sulfur-carrier protein]-S-sulfanyl-L-cysteine + a uridine in tRNA + 2 reduced [2Fe-2S]-[ferredoxin] + ATP + H(+) = [ThiI sulfur-carrier protein]-L-cysteine + a 4-thiouridine in tRNA + 2 oxidized [2Fe-2S]-[ferredoxin] + AMP + diphosphate</text>
        <dbReference type="Rhea" id="RHEA:24176"/>
        <dbReference type="Rhea" id="RHEA-COMP:10000"/>
        <dbReference type="Rhea" id="RHEA-COMP:10001"/>
        <dbReference type="Rhea" id="RHEA-COMP:13337"/>
        <dbReference type="Rhea" id="RHEA-COMP:13338"/>
        <dbReference type="Rhea" id="RHEA-COMP:13339"/>
        <dbReference type="Rhea" id="RHEA-COMP:13340"/>
        <dbReference type="ChEBI" id="CHEBI:15378"/>
        <dbReference type="ChEBI" id="CHEBI:29950"/>
        <dbReference type="ChEBI" id="CHEBI:30616"/>
        <dbReference type="ChEBI" id="CHEBI:33019"/>
        <dbReference type="ChEBI" id="CHEBI:33737"/>
        <dbReference type="ChEBI" id="CHEBI:33738"/>
        <dbReference type="ChEBI" id="CHEBI:61963"/>
        <dbReference type="ChEBI" id="CHEBI:65315"/>
        <dbReference type="ChEBI" id="CHEBI:136798"/>
        <dbReference type="ChEBI" id="CHEBI:456215"/>
        <dbReference type="EC" id="2.8.1.4"/>
    </reaction>
</comment>
<comment type="catalytic activity">
    <reaction evidence="1">
        <text>[ThiS sulfur-carrier protein]-C-terminal Gly-Gly-AMP + S-sulfanyl-L-cysteinyl-[cysteine desulfurase] + AH2 = [ThiS sulfur-carrier protein]-C-terminal-Gly-aminoethanethioate + L-cysteinyl-[cysteine desulfurase] + A + AMP + 2 H(+)</text>
        <dbReference type="Rhea" id="RHEA:43340"/>
        <dbReference type="Rhea" id="RHEA-COMP:12157"/>
        <dbReference type="Rhea" id="RHEA-COMP:12158"/>
        <dbReference type="Rhea" id="RHEA-COMP:12910"/>
        <dbReference type="Rhea" id="RHEA-COMP:19908"/>
        <dbReference type="ChEBI" id="CHEBI:13193"/>
        <dbReference type="ChEBI" id="CHEBI:15378"/>
        <dbReference type="ChEBI" id="CHEBI:17499"/>
        <dbReference type="ChEBI" id="CHEBI:29950"/>
        <dbReference type="ChEBI" id="CHEBI:61963"/>
        <dbReference type="ChEBI" id="CHEBI:90618"/>
        <dbReference type="ChEBI" id="CHEBI:232372"/>
        <dbReference type="ChEBI" id="CHEBI:456215"/>
    </reaction>
</comment>
<comment type="pathway">
    <text evidence="1">Cofactor biosynthesis; thiamine diphosphate biosynthesis.</text>
</comment>
<comment type="subcellular location">
    <subcellularLocation>
        <location evidence="1">Cytoplasm</location>
    </subcellularLocation>
</comment>
<comment type="similarity">
    <text evidence="1">Belongs to the ThiI family.</text>
</comment>
<accession>A1SWV3</accession>
<reference key="1">
    <citation type="journal article" date="2008" name="BMC Genomics">
        <title>Genomics of an extreme psychrophile, Psychromonas ingrahamii.</title>
        <authorList>
            <person name="Riley M."/>
            <person name="Staley J.T."/>
            <person name="Danchin A."/>
            <person name="Wang T.Z."/>
            <person name="Brettin T.S."/>
            <person name="Hauser L.J."/>
            <person name="Land M.L."/>
            <person name="Thompson L.S."/>
        </authorList>
    </citation>
    <scope>NUCLEOTIDE SEQUENCE [LARGE SCALE GENOMIC DNA]</scope>
    <source>
        <strain>DSM 17664 / CCUG 51855 / 37</strain>
    </source>
</reference>
<sequence length="484" mass="54381">MKFIVKLFPEIMMKSRPVRNRFSKILQGNIRNVLTRHDEQVKVILEWDKIIVRTENESAENKANLILLLSSTPGIAHFLEVTESVYTDLHDVYEQTLAMVGDSLDGKTFCVRIKRIGKHDFSSIDAERYVGGGLNQHTDTLGVKLKGPEITINLEINNEKLFFIDKKHPGLGGFPLGTQESVLSLISGGFDSGVSSYKLIKRGSRVHYCFFNLGGGAHEIGVKQVAYQLWNRFGSSHRVKFISIPFEPVVAEILEKVENGQMGVVLKRMMMRAATLMAERLGVEALITGEALGQVSSQTLRNLSVIDKVSDMLILRPLIATDKQDIVDCARVIGTAEISETIPEYCGVISQRPTVKAVMRKIEKQEEKFDLSLIEQVVNQAPTIDIRDIAKAVHKEILEVESVSQFAENEIVLDIRSLDEAEESPLDIEGVTIEHLPFFKLSNQFETLPQDKIYLLYCARGVMSKLQALYLKESGFDNVKVYRP</sequence>
<organism>
    <name type="scientific">Psychromonas ingrahamii (strain DSM 17664 / CCUG 51855 / 37)</name>
    <dbReference type="NCBI Taxonomy" id="357804"/>
    <lineage>
        <taxon>Bacteria</taxon>
        <taxon>Pseudomonadati</taxon>
        <taxon>Pseudomonadota</taxon>
        <taxon>Gammaproteobacteria</taxon>
        <taxon>Alteromonadales</taxon>
        <taxon>Psychromonadaceae</taxon>
        <taxon>Psychromonas</taxon>
    </lineage>
</organism>
<keyword id="KW-0067">ATP-binding</keyword>
<keyword id="KW-0963">Cytoplasm</keyword>
<keyword id="KW-1015">Disulfide bond</keyword>
<keyword id="KW-0547">Nucleotide-binding</keyword>
<keyword id="KW-0676">Redox-active center</keyword>
<keyword id="KW-1185">Reference proteome</keyword>
<keyword id="KW-0694">RNA-binding</keyword>
<keyword id="KW-0784">Thiamine biosynthesis</keyword>
<keyword id="KW-0808">Transferase</keyword>
<keyword id="KW-0820">tRNA-binding</keyword>
<protein>
    <recommendedName>
        <fullName evidence="1">tRNA sulfurtransferase</fullName>
        <ecNumber evidence="1">2.8.1.4</ecNumber>
    </recommendedName>
    <alternativeName>
        <fullName evidence="1">Sulfur carrier protein ThiS sulfurtransferase</fullName>
    </alternativeName>
    <alternativeName>
        <fullName evidence="1">Thiamine biosynthesis protein ThiI</fullName>
    </alternativeName>
    <alternativeName>
        <fullName evidence="1">tRNA 4-thiouridine synthase</fullName>
    </alternativeName>
</protein>